<name>MURE_STRPN</name>
<reference key="1">
    <citation type="journal article" date="2001" name="Science">
        <title>Complete genome sequence of a virulent isolate of Streptococcus pneumoniae.</title>
        <authorList>
            <person name="Tettelin H."/>
            <person name="Nelson K.E."/>
            <person name="Paulsen I.T."/>
            <person name="Eisen J.A."/>
            <person name="Read T.D."/>
            <person name="Peterson S.N."/>
            <person name="Heidelberg J.F."/>
            <person name="DeBoy R.T."/>
            <person name="Haft D.H."/>
            <person name="Dodson R.J."/>
            <person name="Durkin A.S."/>
            <person name="Gwinn M.L."/>
            <person name="Kolonay J.F."/>
            <person name="Nelson W.C."/>
            <person name="Peterson J.D."/>
            <person name="Umayam L.A."/>
            <person name="White O."/>
            <person name="Salzberg S.L."/>
            <person name="Lewis M.R."/>
            <person name="Radune D."/>
            <person name="Holtzapple E.K."/>
            <person name="Khouri H.M."/>
            <person name="Wolf A.M."/>
            <person name="Utterback T.R."/>
            <person name="Hansen C.L."/>
            <person name="McDonald L.A."/>
            <person name="Feldblyum T.V."/>
            <person name="Angiuoli S.V."/>
            <person name="Dickinson T."/>
            <person name="Hickey E.K."/>
            <person name="Holt I.E."/>
            <person name="Loftus B.J."/>
            <person name="Yang F."/>
            <person name="Smith H.O."/>
            <person name="Venter J.C."/>
            <person name="Dougherty B.A."/>
            <person name="Morrison D.A."/>
            <person name="Hollingshead S.K."/>
            <person name="Fraser C.M."/>
        </authorList>
    </citation>
    <scope>NUCLEOTIDE SEQUENCE [LARGE SCALE GENOMIC DNA]</scope>
    <source>
        <strain>ATCC BAA-334 / TIGR4</strain>
    </source>
</reference>
<reference key="2">
    <citation type="journal article" date="2004" name="Acta Crystallogr. D">
        <title>Expression, purification, crystallization and preliminary characterization of uridine 5'-diphospho-N-acetylmuramoyl L-alanyl-D-glutamate:lysine ligase (MurE) from Streptococcus pneumoniae 110K/70.</title>
        <authorList>
            <person name="Blewett A.M."/>
            <person name="Lloyd A.J."/>
            <person name="Echalier A."/>
            <person name="Fueloep V."/>
            <person name="Dowson C.G."/>
            <person name="Bugg T.D.H."/>
            <person name="Roper D.I."/>
        </authorList>
    </citation>
    <scope>FUNCTION</scope>
    <scope>CRYSTALLIZATION</scope>
    <source>
        <strain>110K/70</strain>
    </source>
</reference>
<evidence type="ECO:0000250" key="1"/>
<evidence type="ECO:0000255" key="2"/>
<evidence type="ECO:0000269" key="3">
    <source>
    </source>
</evidence>
<evidence type="ECO:0000305" key="4"/>
<feature type="chain" id="PRO_0000101953" description="UDP-N-acetylmuramoyl-L-alanyl-D-glutamate--L-lysine ligase">
    <location>
        <begin position="1"/>
        <end position="481"/>
    </location>
</feature>
<feature type="short sequence motif" description="L-lysine recognition motif">
    <location>
        <begin position="404"/>
        <end position="407"/>
    </location>
</feature>
<feature type="binding site" evidence="1">
    <location>
        <position position="42"/>
    </location>
    <ligand>
        <name>UDP-N-acetyl-alpha-D-muramoyl-L-alanyl-D-glutamate</name>
        <dbReference type="ChEBI" id="CHEBI:83900"/>
    </ligand>
</feature>
<feature type="binding site" evidence="2">
    <location>
        <begin position="118"/>
        <end position="124"/>
    </location>
    <ligand>
        <name>ATP</name>
        <dbReference type="ChEBI" id="CHEBI:30616"/>
    </ligand>
</feature>
<feature type="binding site" evidence="1">
    <location>
        <begin position="160"/>
        <end position="161"/>
    </location>
    <ligand>
        <name>UDP-N-acetyl-alpha-D-muramoyl-L-alanyl-D-glutamate</name>
        <dbReference type="ChEBI" id="CHEBI:83900"/>
    </ligand>
</feature>
<feature type="binding site" evidence="1">
    <location>
        <position position="187"/>
    </location>
    <ligand>
        <name>UDP-N-acetyl-alpha-D-muramoyl-L-alanyl-D-glutamate</name>
        <dbReference type="ChEBI" id="CHEBI:83900"/>
    </ligand>
</feature>
<feature type="binding site" evidence="1">
    <location>
        <position position="195"/>
    </location>
    <ligand>
        <name>UDP-N-acetyl-alpha-D-muramoyl-L-alanyl-D-glutamate</name>
        <dbReference type="ChEBI" id="CHEBI:83900"/>
    </ligand>
</feature>
<feature type="modified residue" description="N6-carboxylysine" evidence="1">
    <location>
        <position position="229"/>
    </location>
</feature>
<comment type="function">
    <text evidence="3">Catalyzes the addition of L-lysine to the nucleotide precursor UDP-N-acetylmuramoyl-L-alanyl-D-glutamate (UMAG) in the biosynthesis of bacterial cell-wall peptidoglycan.</text>
</comment>
<comment type="catalytic activity">
    <reaction>
        <text>UDP-N-acetyl-alpha-D-muramoyl-L-alanyl-D-glutamate + L-lysine + ATP = UDP-N-acetyl-alpha-D-muramoyl-L-alanyl-gamma-D-glutamyl-L-lysine + ADP + phosphate + H(+)</text>
        <dbReference type="Rhea" id="RHEA:17969"/>
        <dbReference type="ChEBI" id="CHEBI:15378"/>
        <dbReference type="ChEBI" id="CHEBI:30616"/>
        <dbReference type="ChEBI" id="CHEBI:32551"/>
        <dbReference type="ChEBI" id="CHEBI:43474"/>
        <dbReference type="ChEBI" id="CHEBI:83900"/>
        <dbReference type="ChEBI" id="CHEBI:83903"/>
        <dbReference type="ChEBI" id="CHEBI:456216"/>
        <dbReference type="EC" id="6.3.2.7"/>
    </reaction>
</comment>
<comment type="pathway">
    <text>Cell wall biogenesis; peptidoglycan biosynthesis.</text>
</comment>
<comment type="subcellular location">
    <subcellularLocation>
        <location evidence="1">Cytoplasm</location>
    </subcellularLocation>
</comment>
<comment type="PTM">
    <text evidence="1">Carboxylation is probably crucial for Mg(2+) binding and, consequently, for the gamma-phosphate positioning of ATP.</text>
</comment>
<comment type="similarity">
    <text evidence="4">Belongs to the MurCDEF family. MurE subfamily.</text>
</comment>
<protein>
    <recommendedName>
        <fullName>UDP-N-acetylmuramoyl-L-alanyl-D-glutamate--L-lysine ligase</fullName>
        <ecNumber>6.3.2.7</ecNumber>
    </recommendedName>
    <alternativeName>
        <fullName>L-lysine-adding enzyme</fullName>
    </alternativeName>
    <alternativeName>
        <fullName>UDP-MurNAc-L-Ala-D-Glu:L-Lys ligase</fullName>
    </alternativeName>
    <alternativeName>
        <fullName>UDP-MurNAc-tripeptide synthetase</fullName>
    </alternativeName>
    <alternativeName>
        <fullName>UDP-N-acetylmuramyl-tripeptide synthetase</fullName>
    </alternativeName>
</protein>
<proteinExistence type="evidence at protein level"/>
<organism>
    <name type="scientific">Streptococcus pneumoniae serotype 4 (strain ATCC BAA-334 / TIGR4)</name>
    <dbReference type="NCBI Taxonomy" id="170187"/>
    <lineage>
        <taxon>Bacteria</taxon>
        <taxon>Bacillati</taxon>
        <taxon>Bacillota</taxon>
        <taxon>Bacilli</taxon>
        <taxon>Lactobacillales</taxon>
        <taxon>Streptococcaceae</taxon>
        <taxon>Streptococcus</taxon>
    </lineage>
</organism>
<sequence>MIKIETVLDILKKDGLFREIIDQGHYHYNYSKVIFDSISYDSRKVTEDTLFFAKGAAFKKEYLLSAITQGLAWYVAEKDYEVGIPVIIVNDIKKAMSLIAMEFYGNPQEKLKLLAFTGTKGKTTAAYFAYNILSQGHRPAMLSTMNTTLDGETFFKSALTTPESIDLFDMMNQAVQNDRTHLIMEVSSQAYLVKRVYGLTFDVGVFLNISPDHIGPIEHPSFEDYFYHKRLLMEKSRAVIINSDMDHFSVLKEQVEDQDHDFYGSQFDNQIENSKAFSFSATGKLAGDYDIQLIGNFNQENAVAAGLACLRLGASLEDIKKGIAATRVPGRMEVLTQKNGAKVFIDYAHNGDSLKKLINVVETHQTGKIALVLGSTGNKGESRRKDFGLLLNQHPEIQVFLTADDPNYEDPMAIADEISSYINHPVEKIADRQEAIKAAMAITNHELDAVIIAGKGADCYQIIQGKKESYPGDTAVAENYL</sequence>
<accession>Q97PS1</accession>
<dbReference type="EC" id="6.3.2.7"/>
<dbReference type="EMBL" id="AE005672">
    <property type="protein sequence ID" value="AAK75619.1"/>
    <property type="molecule type" value="Genomic_DNA"/>
</dbReference>
<dbReference type="PIR" id="B95178">
    <property type="entry name" value="B95178"/>
</dbReference>
<dbReference type="RefSeq" id="WP_000590301.1">
    <property type="nucleotide sequence ID" value="NC_003028.3"/>
</dbReference>
<dbReference type="SMR" id="Q97PS1"/>
<dbReference type="PaxDb" id="170187-SP_1530"/>
<dbReference type="EnsemblBacteria" id="AAK75619">
    <property type="protein sequence ID" value="AAK75619"/>
    <property type="gene ID" value="SP_1530"/>
</dbReference>
<dbReference type="KEGG" id="spn:SP_1530"/>
<dbReference type="eggNOG" id="COG0769">
    <property type="taxonomic scope" value="Bacteria"/>
</dbReference>
<dbReference type="PhylomeDB" id="Q97PS1"/>
<dbReference type="BioCyc" id="SPNE170187:G1FZB-1548-MONOMER"/>
<dbReference type="UniPathway" id="UPA00219"/>
<dbReference type="Proteomes" id="UP000000585">
    <property type="component" value="Chromosome"/>
</dbReference>
<dbReference type="GO" id="GO:0005737">
    <property type="term" value="C:cytoplasm"/>
    <property type="evidence" value="ECO:0007669"/>
    <property type="project" value="UniProtKB-SubCell"/>
</dbReference>
<dbReference type="GO" id="GO:0005524">
    <property type="term" value="F:ATP binding"/>
    <property type="evidence" value="ECO:0007669"/>
    <property type="project" value="UniProtKB-UniRule"/>
</dbReference>
<dbReference type="GO" id="GO:0000287">
    <property type="term" value="F:magnesium ion binding"/>
    <property type="evidence" value="ECO:0007669"/>
    <property type="project" value="UniProtKB-UniRule"/>
</dbReference>
<dbReference type="GO" id="GO:0047482">
    <property type="term" value="F:UDP-N-acetylmuramoyl-L-alanyl-D-glutamate-L-lysine ligase activity"/>
    <property type="evidence" value="ECO:0007669"/>
    <property type="project" value="UniProtKB-UniRule"/>
</dbReference>
<dbReference type="GO" id="GO:0051301">
    <property type="term" value="P:cell division"/>
    <property type="evidence" value="ECO:0007669"/>
    <property type="project" value="UniProtKB-KW"/>
</dbReference>
<dbReference type="GO" id="GO:0071555">
    <property type="term" value="P:cell wall organization"/>
    <property type="evidence" value="ECO:0007669"/>
    <property type="project" value="UniProtKB-KW"/>
</dbReference>
<dbReference type="GO" id="GO:0009252">
    <property type="term" value="P:peptidoglycan biosynthetic process"/>
    <property type="evidence" value="ECO:0007669"/>
    <property type="project" value="UniProtKB-UniRule"/>
</dbReference>
<dbReference type="GO" id="GO:0008360">
    <property type="term" value="P:regulation of cell shape"/>
    <property type="evidence" value="ECO:0007669"/>
    <property type="project" value="UniProtKB-KW"/>
</dbReference>
<dbReference type="Gene3D" id="3.90.190.20">
    <property type="entry name" value="Mur ligase, C-terminal domain"/>
    <property type="match status" value="1"/>
</dbReference>
<dbReference type="Gene3D" id="3.40.1190.10">
    <property type="entry name" value="Mur-like, catalytic domain"/>
    <property type="match status" value="1"/>
</dbReference>
<dbReference type="Gene3D" id="3.40.1390.10">
    <property type="entry name" value="MurE/MurF, N-terminal domain"/>
    <property type="match status" value="1"/>
</dbReference>
<dbReference type="HAMAP" id="MF_00208">
    <property type="entry name" value="MurE"/>
    <property type="match status" value="1"/>
</dbReference>
<dbReference type="InterPro" id="IPR036565">
    <property type="entry name" value="Mur-like_cat_sf"/>
</dbReference>
<dbReference type="InterPro" id="IPR004101">
    <property type="entry name" value="Mur_ligase_C"/>
</dbReference>
<dbReference type="InterPro" id="IPR036615">
    <property type="entry name" value="Mur_ligase_C_dom_sf"/>
</dbReference>
<dbReference type="InterPro" id="IPR013221">
    <property type="entry name" value="Mur_ligase_cen"/>
</dbReference>
<dbReference type="InterPro" id="IPR035911">
    <property type="entry name" value="MurE/MurF_N"/>
</dbReference>
<dbReference type="InterPro" id="IPR005761">
    <property type="entry name" value="UDP-N-AcMur-Glu-dNH2Pim_ligase"/>
</dbReference>
<dbReference type="NCBIfam" id="TIGR01085">
    <property type="entry name" value="murE"/>
    <property type="match status" value="1"/>
</dbReference>
<dbReference type="NCBIfam" id="NF010628">
    <property type="entry name" value="PRK14022.1"/>
    <property type="match status" value="1"/>
</dbReference>
<dbReference type="PANTHER" id="PTHR23135">
    <property type="entry name" value="MUR LIGASE FAMILY MEMBER"/>
    <property type="match status" value="1"/>
</dbReference>
<dbReference type="PANTHER" id="PTHR23135:SF4">
    <property type="entry name" value="UDP-N-ACETYLMURAMOYL-L-ALANYL-D-GLUTAMATE--2,6-DIAMINOPIMELATE LIGASE MURE HOMOLOG, CHLOROPLASTIC"/>
    <property type="match status" value="1"/>
</dbReference>
<dbReference type="Pfam" id="PF02875">
    <property type="entry name" value="Mur_ligase_C"/>
    <property type="match status" value="1"/>
</dbReference>
<dbReference type="Pfam" id="PF08245">
    <property type="entry name" value="Mur_ligase_M"/>
    <property type="match status" value="1"/>
</dbReference>
<dbReference type="SUPFAM" id="SSF53623">
    <property type="entry name" value="MurD-like peptide ligases, catalytic domain"/>
    <property type="match status" value="1"/>
</dbReference>
<dbReference type="SUPFAM" id="SSF53244">
    <property type="entry name" value="MurD-like peptide ligases, peptide-binding domain"/>
    <property type="match status" value="1"/>
</dbReference>
<dbReference type="SUPFAM" id="SSF63418">
    <property type="entry name" value="MurE/MurF N-terminal domain"/>
    <property type="match status" value="1"/>
</dbReference>
<keyword id="KW-0067">ATP-binding</keyword>
<keyword id="KW-0131">Cell cycle</keyword>
<keyword id="KW-0132">Cell division</keyword>
<keyword id="KW-0133">Cell shape</keyword>
<keyword id="KW-0961">Cell wall biogenesis/degradation</keyword>
<keyword id="KW-0963">Cytoplasm</keyword>
<keyword id="KW-0436">Ligase</keyword>
<keyword id="KW-0547">Nucleotide-binding</keyword>
<keyword id="KW-0573">Peptidoglycan synthesis</keyword>
<keyword id="KW-1185">Reference proteome</keyword>
<gene>
    <name type="primary">murE</name>
    <name type="ordered locus">SP_1530</name>
</gene>